<accession>P58332</accession>
<accession>Q9EXV3</accession>
<name>CBBR_RHIME</name>
<evidence type="ECO:0000250" key="1"/>
<evidence type="ECO:0000255" key="2">
    <source>
        <dbReference type="PROSITE-ProRule" id="PRU00253"/>
    </source>
</evidence>
<evidence type="ECO:0000305" key="3"/>
<dbReference type="EMBL" id="AY013584">
    <property type="protein sequence ID" value="AAG42537.1"/>
    <property type="molecule type" value="Genomic_DNA"/>
</dbReference>
<dbReference type="EMBL" id="AL591985">
    <property type="protein sequence ID" value="CAC48596.1"/>
    <property type="molecule type" value="Genomic_DNA"/>
</dbReference>
<dbReference type="PIR" id="D95866">
    <property type="entry name" value="D95866"/>
</dbReference>
<dbReference type="RefSeq" id="NP_436736.1">
    <property type="nucleotide sequence ID" value="NC_003078.1"/>
</dbReference>
<dbReference type="RefSeq" id="WP_003528716.1">
    <property type="nucleotide sequence ID" value="NC_003078.1"/>
</dbReference>
<dbReference type="SMR" id="P58332"/>
<dbReference type="EnsemblBacteria" id="CAC48596">
    <property type="protein sequence ID" value="CAC48596"/>
    <property type="gene ID" value="SM_b20203"/>
</dbReference>
<dbReference type="KEGG" id="sme:SM_b20203"/>
<dbReference type="PATRIC" id="fig|266834.11.peg.5112"/>
<dbReference type="eggNOG" id="COG0583">
    <property type="taxonomic scope" value="Bacteria"/>
</dbReference>
<dbReference type="HOGENOM" id="CLU_039613_6_1_5"/>
<dbReference type="OrthoDB" id="7840053at2"/>
<dbReference type="Proteomes" id="UP000001976">
    <property type="component" value="Plasmid pSymB"/>
</dbReference>
<dbReference type="GO" id="GO:0003700">
    <property type="term" value="F:DNA-binding transcription factor activity"/>
    <property type="evidence" value="ECO:0007669"/>
    <property type="project" value="InterPro"/>
</dbReference>
<dbReference type="GO" id="GO:0000976">
    <property type="term" value="F:transcription cis-regulatory region binding"/>
    <property type="evidence" value="ECO:0007669"/>
    <property type="project" value="TreeGrafter"/>
</dbReference>
<dbReference type="CDD" id="cd08419">
    <property type="entry name" value="PBP2_CbbR_RubisCO_like"/>
    <property type="match status" value="1"/>
</dbReference>
<dbReference type="Gene3D" id="3.40.190.10">
    <property type="entry name" value="Periplasmic binding protein-like II"/>
    <property type="match status" value="2"/>
</dbReference>
<dbReference type="Gene3D" id="1.10.10.10">
    <property type="entry name" value="Winged helix-like DNA-binding domain superfamily/Winged helix DNA-binding domain"/>
    <property type="match status" value="1"/>
</dbReference>
<dbReference type="InterPro" id="IPR005119">
    <property type="entry name" value="LysR_subst-bd"/>
</dbReference>
<dbReference type="InterPro" id="IPR000847">
    <property type="entry name" value="Tscrpt_reg_HTH_LysR"/>
</dbReference>
<dbReference type="InterPro" id="IPR036388">
    <property type="entry name" value="WH-like_DNA-bd_sf"/>
</dbReference>
<dbReference type="InterPro" id="IPR036390">
    <property type="entry name" value="WH_DNA-bd_sf"/>
</dbReference>
<dbReference type="PANTHER" id="PTHR30126:SF5">
    <property type="entry name" value="HTH-TYPE TRANSCRIPTIONAL ACTIVATOR CMPR"/>
    <property type="match status" value="1"/>
</dbReference>
<dbReference type="PANTHER" id="PTHR30126">
    <property type="entry name" value="HTH-TYPE TRANSCRIPTIONAL REGULATOR"/>
    <property type="match status" value="1"/>
</dbReference>
<dbReference type="Pfam" id="PF00126">
    <property type="entry name" value="HTH_1"/>
    <property type="match status" value="1"/>
</dbReference>
<dbReference type="Pfam" id="PF03466">
    <property type="entry name" value="LysR_substrate"/>
    <property type="match status" value="1"/>
</dbReference>
<dbReference type="SUPFAM" id="SSF53850">
    <property type="entry name" value="Periplasmic binding protein-like II"/>
    <property type="match status" value="1"/>
</dbReference>
<dbReference type="SUPFAM" id="SSF46785">
    <property type="entry name" value="Winged helix' DNA-binding domain"/>
    <property type="match status" value="1"/>
</dbReference>
<dbReference type="PROSITE" id="PS50931">
    <property type="entry name" value="HTH_LYSR"/>
    <property type="match status" value="1"/>
</dbReference>
<gene>
    <name type="primary">cbbR</name>
    <name type="ordered locus">RB0196</name>
    <name type="ORF">SMb20203</name>
</gene>
<sequence>MRNVTFRQLRTVEAVCRLGKINLAAEALGLTGPALTLQIQHLERDAGIALFDRTRGGMVPTAYGLAFLEAARAIEDSLIALEDSIDAIKGLRTGRLRLGVVSTGKYFAPQLIAAFRDQVPAVEINLFIGNRAEIIAKLRDHEIDIALMGRPPRDFEVRAQVFGDHPLVFIAPAGHPLAGVLEISRERIAQEQFLVREKGSGTRISLEIFLSDTPHELEELGTEIASNETIKQAVIAGLGIAFISAHTIEQEVKLGRLVILDVIDTPIRRQWFTVSRLDRVATPAMQAFERFVLASGARYLPVVSKPYPANAFG</sequence>
<feature type="chain" id="PRO_0000105604" description="HTH-type transcriptional regulator CbbR">
    <location>
        <begin position="1"/>
        <end position="313"/>
    </location>
</feature>
<feature type="domain" description="HTH lysR-type" evidence="2">
    <location>
        <begin position="1"/>
        <end position="61"/>
    </location>
</feature>
<feature type="DNA-binding region" description="H-T-H motif" evidence="2">
    <location>
        <begin position="21"/>
        <end position="40"/>
    </location>
</feature>
<geneLocation type="plasmid">
    <name>pSymB</name>
    <name>megaplasmid 2</name>
</geneLocation>
<comment type="function">
    <text evidence="1">Transcriptional activator for the cbb operon for RuBisCO and other Calvin cycle genes.</text>
</comment>
<comment type="similarity">
    <text evidence="3">Belongs to the LysR transcriptional regulatory family.</text>
</comment>
<proteinExistence type="inferred from homology"/>
<reference key="1">
    <citation type="submission" date="2000-10" db="EMBL/GenBank/DDBJ databases">
        <title>Mineral phosphate solubilization in Sinorhizobium meliloti.</title>
        <authorList>
            <person name="Finan T.M."/>
            <person name="Aneja P."/>
            <person name="Chain P."/>
            <person name="Napper K."/>
            <person name="Golding B."/>
        </authorList>
    </citation>
    <scope>NUCLEOTIDE SEQUENCE [GENOMIC DNA]</scope>
    <source>
        <strain>1021</strain>
    </source>
</reference>
<reference key="2">
    <citation type="journal article" date="2001" name="Proc. Natl. Acad. Sci. U.S.A.">
        <title>The complete sequence of the 1,683-kb pSymB megaplasmid from the N2-fixing endosymbiont Sinorhizobium meliloti.</title>
        <authorList>
            <person name="Finan T.M."/>
            <person name="Weidner S."/>
            <person name="Wong K."/>
            <person name="Buhrmester J."/>
            <person name="Chain P."/>
            <person name="Vorhoelter F.J."/>
            <person name="Hernandez-Lucas I."/>
            <person name="Becker A."/>
            <person name="Cowie A."/>
            <person name="Gouzy J."/>
            <person name="Golding B."/>
            <person name="Puehler A."/>
        </authorList>
    </citation>
    <scope>NUCLEOTIDE SEQUENCE [LARGE SCALE GENOMIC DNA]</scope>
    <source>
        <strain>1021</strain>
    </source>
</reference>
<reference key="3">
    <citation type="journal article" date="2001" name="Science">
        <title>The composite genome of the legume symbiont Sinorhizobium meliloti.</title>
        <authorList>
            <person name="Galibert F."/>
            <person name="Finan T.M."/>
            <person name="Long S.R."/>
            <person name="Puehler A."/>
            <person name="Abola P."/>
            <person name="Ampe F."/>
            <person name="Barloy-Hubler F."/>
            <person name="Barnett M.J."/>
            <person name="Becker A."/>
            <person name="Boistard P."/>
            <person name="Bothe G."/>
            <person name="Boutry M."/>
            <person name="Bowser L."/>
            <person name="Buhrmester J."/>
            <person name="Cadieu E."/>
            <person name="Capela D."/>
            <person name="Chain P."/>
            <person name="Cowie A."/>
            <person name="Davis R.W."/>
            <person name="Dreano S."/>
            <person name="Federspiel N.A."/>
            <person name="Fisher R.F."/>
            <person name="Gloux S."/>
            <person name="Godrie T."/>
            <person name="Goffeau A."/>
            <person name="Golding B."/>
            <person name="Gouzy J."/>
            <person name="Gurjal M."/>
            <person name="Hernandez-Lucas I."/>
            <person name="Hong A."/>
            <person name="Huizar L."/>
            <person name="Hyman R.W."/>
            <person name="Jones T."/>
            <person name="Kahn D."/>
            <person name="Kahn M.L."/>
            <person name="Kalman S."/>
            <person name="Keating D.H."/>
            <person name="Kiss E."/>
            <person name="Komp C."/>
            <person name="Lelaure V."/>
            <person name="Masuy D."/>
            <person name="Palm C."/>
            <person name="Peck M.C."/>
            <person name="Pohl T.M."/>
            <person name="Portetelle D."/>
            <person name="Purnelle B."/>
            <person name="Ramsperger U."/>
            <person name="Surzycki R."/>
            <person name="Thebault P."/>
            <person name="Vandenbol M."/>
            <person name="Vorhoelter F.J."/>
            <person name="Weidner S."/>
            <person name="Wells D.H."/>
            <person name="Wong K."/>
            <person name="Yeh K.-C."/>
            <person name="Batut J."/>
        </authorList>
    </citation>
    <scope>NUCLEOTIDE SEQUENCE [LARGE SCALE GENOMIC DNA]</scope>
    <source>
        <strain>1021</strain>
    </source>
</reference>
<keyword id="KW-0010">Activator</keyword>
<keyword id="KW-0238">DNA-binding</keyword>
<keyword id="KW-0614">Plasmid</keyword>
<keyword id="KW-1185">Reference proteome</keyword>
<keyword id="KW-0804">Transcription</keyword>
<keyword id="KW-0805">Transcription regulation</keyword>
<protein>
    <recommendedName>
        <fullName>HTH-type transcriptional regulator CbbR</fullName>
    </recommendedName>
    <alternativeName>
        <fullName>RuBisCO operon transcriptional regulator</fullName>
    </alternativeName>
</protein>
<organism>
    <name type="scientific">Rhizobium meliloti (strain 1021)</name>
    <name type="common">Ensifer meliloti</name>
    <name type="synonym">Sinorhizobium meliloti</name>
    <dbReference type="NCBI Taxonomy" id="266834"/>
    <lineage>
        <taxon>Bacteria</taxon>
        <taxon>Pseudomonadati</taxon>
        <taxon>Pseudomonadota</taxon>
        <taxon>Alphaproteobacteria</taxon>
        <taxon>Hyphomicrobiales</taxon>
        <taxon>Rhizobiaceae</taxon>
        <taxon>Sinorhizobium/Ensifer group</taxon>
        <taxon>Sinorhizobium</taxon>
    </lineage>
</organism>